<reference key="1">
    <citation type="journal article" date="2002" name="Mol. Microbiol.">
        <title>Genome sequence of Streptococcus agalactiae, a pathogen causing invasive neonatal disease.</title>
        <authorList>
            <person name="Glaser P."/>
            <person name="Rusniok C."/>
            <person name="Buchrieser C."/>
            <person name="Chevalier F."/>
            <person name="Frangeul L."/>
            <person name="Msadek T."/>
            <person name="Zouine M."/>
            <person name="Couve E."/>
            <person name="Lalioui L."/>
            <person name="Poyart C."/>
            <person name="Trieu-Cuot P."/>
            <person name="Kunst F."/>
        </authorList>
    </citation>
    <scope>NUCLEOTIDE SEQUENCE [LARGE SCALE GENOMIC DNA]</scope>
    <source>
        <strain>NEM316</strain>
    </source>
</reference>
<comment type="function">
    <text evidence="1">Involved in the synthesis of autoinducer 2 (AI-2) which is secreted by bacteria and is used to communicate both the cell density and the metabolic potential of the environment. The regulation of gene expression in response to changes in cell density is called quorum sensing. Catalyzes the transformation of S-ribosylhomocysteine (RHC) to homocysteine (HC) and 4,5-dihydroxy-2,3-pentadione (DPD).</text>
</comment>
<comment type="catalytic activity">
    <reaction evidence="1">
        <text>S-(5-deoxy-D-ribos-5-yl)-L-homocysteine = (S)-4,5-dihydroxypentane-2,3-dione + L-homocysteine</text>
        <dbReference type="Rhea" id="RHEA:17753"/>
        <dbReference type="ChEBI" id="CHEBI:29484"/>
        <dbReference type="ChEBI" id="CHEBI:58195"/>
        <dbReference type="ChEBI" id="CHEBI:58199"/>
        <dbReference type="EC" id="4.4.1.21"/>
    </reaction>
</comment>
<comment type="cofactor">
    <cofactor evidence="1">
        <name>Fe cation</name>
        <dbReference type="ChEBI" id="CHEBI:24875"/>
    </cofactor>
    <text evidence="1">Binds 1 Fe cation per subunit.</text>
</comment>
<comment type="subunit">
    <text evidence="1">Homodimer.</text>
</comment>
<comment type="similarity">
    <text evidence="1">Belongs to the LuxS family.</text>
</comment>
<gene>
    <name evidence="1" type="primary">luxS</name>
    <name type="ordered locus">gbs0294</name>
</gene>
<protein>
    <recommendedName>
        <fullName evidence="1">S-ribosylhomocysteine lyase</fullName>
        <ecNumber evidence="1">4.4.1.21</ecNumber>
    </recommendedName>
    <alternativeName>
        <fullName evidence="1">AI-2 synthesis protein</fullName>
    </alternativeName>
    <alternativeName>
        <fullName evidence="1">Autoinducer-2 production protein LuxS</fullName>
    </alternativeName>
</protein>
<dbReference type="EC" id="4.4.1.21" evidence="1"/>
<dbReference type="EMBL" id="AL766844">
    <property type="protein sequence ID" value="CAD45939.1"/>
    <property type="molecule type" value="Genomic_DNA"/>
</dbReference>
<dbReference type="RefSeq" id="WP_000159885.1">
    <property type="nucleotide sequence ID" value="NC_004368.1"/>
</dbReference>
<dbReference type="SMR" id="P65332"/>
<dbReference type="KEGG" id="san:gbs0294"/>
<dbReference type="eggNOG" id="COG1854">
    <property type="taxonomic scope" value="Bacteria"/>
</dbReference>
<dbReference type="HOGENOM" id="CLU_107531_2_1_9"/>
<dbReference type="Proteomes" id="UP000000823">
    <property type="component" value="Chromosome"/>
</dbReference>
<dbReference type="GO" id="GO:0005506">
    <property type="term" value="F:iron ion binding"/>
    <property type="evidence" value="ECO:0007669"/>
    <property type="project" value="InterPro"/>
</dbReference>
<dbReference type="GO" id="GO:0043768">
    <property type="term" value="F:S-ribosylhomocysteine lyase activity"/>
    <property type="evidence" value="ECO:0007669"/>
    <property type="project" value="UniProtKB-UniRule"/>
</dbReference>
<dbReference type="GO" id="GO:0009372">
    <property type="term" value="P:quorum sensing"/>
    <property type="evidence" value="ECO:0007669"/>
    <property type="project" value="UniProtKB-UniRule"/>
</dbReference>
<dbReference type="Gene3D" id="3.30.1360.80">
    <property type="entry name" value="S-ribosylhomocysteinase (LuxS)"/>
    <property type="match status" value="1"/>
</dbReference>
<dbReference type="HAMAP" id="MF_00091">
    <property type="entry name" value="LuxS"/>
    <property type="match status" value="1"/>
</dbReference>
<dbReference type="InterPro" id="IPR037005">
    <property type="entry name" value="LuxS_sf"/>
</dbReference>
<dbReference type="InterPro" id="IPR011249">
    <property type="entry name" value="Metalloenz_LuxS/M16"/>
</dbReference>
<dbReference type="InterPro" id="IPR003815">
    <property type="entry name" value="S-ribosylhomocysteinase"/>
</dbReference>
<dbReference type="NCBIfam" id="NF002607">
    <property type="entry name" value="PRK02260.2-5"/>
    <property type="match status" value="1"/>
</dbReference>
<dbReference type="NCBIfam" id="NF002608">
    <property type="entry name" value="PRK02260.3-1"/>
    <property type="match status" value="1"/>
</dbReference>
<dbReference type="PANTHER" id="PTHR35799">
    <property type="entry name" value="S-RIBOSYLHOMOCYSTEINE LYASE"/>
    <property type="match status" value="1"/>
</dbReference>
<dbReference type="PANTHER" id="PTHR35799:SF1">
    <property type="entry name" value="S-RIBOSYLHOMOCYSTEINE LYASE"/>
    <property type="match status" value="1"/>
</dbReference>
<dbReference type="Pfam" id="PF02664">
    <property type="entry name" value="LuxS"/>
    <property type="match status" value="1"/>
</dbReference>
<dbReference type="PIRSF" id="PIRSF006160">
    <property type="entry name" value="AI2"/>
    <property type="match status" value="1"/>
</dbReference>
<dbReference type="PRINTS" id="PR01487">
    <property type="entry name" value="LUXSPROTEIN"/>
</dbReference>
<dbReference type="SUPFAM" id="SSF63411">
    <property type="entry name" value="LuxS/MPP-like metallohydrolase"/>
    <property type="match status" value="1"/>
</dbReference>
<organism>
    <name type="scientific">Streptococcus agalactiae serotype III (strain NEM316)</name>
    <dbReference type="NCBI Taxonomy" id="211110"/>
    <lineage>
        <taxon>Bacteria</taxon>
        <taxon>Bacillati</taxon>
        <taxon>Bacillota</taxon>
        <taxon>Bacilli</taxon>
        <taxon>Lactobacillales</taxon>
        <taxon>Streptococcaceae</taxon>
        <taxon>Streptococcus</taxon>
    </lineage>
</organism>
<evidence type="ECO:0000255" key="1">
    <source>
        <dbReference type="HAMAP-Rule" id="MF_00091"/>
    </source>
</evidence>
<sequence length="160" mass="17736">MTKEVVVESFELDHTIVKAPYVRLISEEVGPVGDIITNFDIRLIQPNENAIDTAGLHTIEHLLAKLIRQRINGLIDCSPFGCRTGFHMIMWGKQDATEIAKVIKSSLEAIAGGVTWEDVPGTTIESCGNYKDHSLHSAQEWAKLILSQGISDNAFERHIV</sequence>
<name>LUXS_STRA3</name>
<feature type="chain" id="PRO_0000172261" description="S-ribosylhomocysteine lyase">
    <location>
        <begin position="1"/>
        <end position="160"/>
    </location>
</feature>
<feature type="binding site" evidence="1">
    <location>
        <position position="57"/>
    </location>
    <ligand>
        <name>Fe cation</name>
        <dbReference type="ChEBI" id="CHEBI:24875"/>
    </ligand>
</feature>
<feature type="binding site" evidence="1">
    <location>
        <position position="61"/>
    </location>
    <ligand>
        <name>Fe cation</name>
        <dbReference type="ChEBI" id="CHEBI:24875"/>
    </ligand>
</feature>
<feature type="binding site" evidence="1">
    <location>
        <position position="127"/>
    </location>
    <ligand>
        <name>Fe cation</name>
        <dbReference type="ChEBI" id="CHEBI:24875"/>
    </ligand>
</feature>
<proteinExistence type="inferred from homology"/>
<accession>P65332</accession>
<accession>Q8E1P8</accession>
<accession>Q8E763</accession>
<keyword id="KW-0071">Autoinducer synthesis</keyword>
<keyword id="KW-0408">Iron</keyword>
<keyword id="KW-0456">Lyase</keyword>
<keyword id="KW-0479">Metal-binding</keyword>
<keyword id="KW-0673">Quorum sensing</keyword>